<comment type="function">
    <text evidence="3">Short chain dehydrogenase/reductase; part of the gene cluster that mediates the biosynthesis of astellolides, drimane-type sesquiterpene esters that show antimicrobial, anti-inflammatory, and anti-tumor activities (PubMed:27628599). The first step in astellolide biosynthesis is performed by the sesquiterpene cyclase astC that catalyzes the formation of drimanyl pyrophosphate from farnesyl pyrophosphate (PubMed:27628599). Drimanyl pyrophosphate is then dephosphorylated by the sesquiterpene phosphatase astI to produce drimanyl monophosphate which is further dephosphorylated to drim-8-ene-11-ol by atsK (PubMed:27628599). Drim-8-ene-11-ol is converted to confertifolin, probably by the cytochrome P450 monooxygenase astD and/or the dehydrogenase astE (PubMed:27628599). The cytochrome P450 monooxygenases astB, astF and astJ then hydroxylate confertifolin at C6, C14, or C15 to form trihydroxy confertifolin (PubMed:27628599). The nonribosomal peptide synthetase astA catalyzes ester bond formation between trihydroxy contifolin and benzoic acid (BA) or 4-hydroxy benzoic acid (4HBA), leading to the formation of dideacetyl astellolides A and B, respectively (PubMed:27628599). Finally, the O-acetyltransferase astG converts dideacetyl astellolides A and B into deacetyl astellolides A and B (PubMed:27628599).</text>
</comment>
<comment type="pathway">
    <text evidence="3">Secondary metabolite biosynthesis; terpenoid biosynthesis.</text>
</comment>
<comment type="induction">
    <text evidence="3">Expression is regulated by the secondary metabolite regulator cclA.</text>
</comment>
<comment type="disruption phenotype">
    <text evidence="3">Significantly reduces the production of deacetyl astellolides A and B.</text>
</comment>
<comment type="similarity">
    <text evidence="5">Belongs to the short-chain dehydrogenases/reductases (SDR) family.</text>
</comment>
<accession>Q2UEK6</accession>
<keyword id="KW-0521">NADP</keyword>
<keyword id="KW-0560">Oxidoreductase</keyword>
<keyword id="KW-1185">Reference proteome</keyword>
<dbReference type="EC" id="1.1.-.-" evidence="6"/>
<dbReference type="EMBL" id="BA000051">
    <property type="protein sequence ID" value="BAE60009.1"/>
    <property type="molecule type" value="Genomic_DNA"/>
</dbReference>
<dbReference type="RefSeq" id="XP_001822011.1">
    <property type="nucleotide sequence ID" value="XM_001821959.1"/>
</dbReference>
<dbReference type="SMR" id="Q2UEK6"/>
<dbReference type="EnsemblFungi" id="BAE60009">
    <property type="protein sequence ID" value="BAE60009"/>
    <property type="gene ID" value="AO090026000580"/>
</dbReference>
<dbReference type="GeneID" id="5994039"/>
<dbReference type="KEGG" id="aor:AO090026000580"/>
<dbReference type="VEuPathDB" id="FungiDB:AO090026000580"/>
<dbReference type="HOGENOM" id="CLU_010194_1_0_1"/>
<dbReference type="OMA" id="TETAACE"/>
<dbReference type="OrthoDB" id="30681at5052"/>
<dbReference type="UniPathway" id="UPA00213"/>
<dbReference type="Proteomes" id="UP000006564">
    <property type="component" value="Chromosome 3"/>
</dbReference>
<dbReference type="GO" id="GO:0016491">
    <property type="term" value="F:oxidoreductase activity"/>
    <property type="evidence" value="ECO:0007669"/>
    <property type="project" value="UniProtKB-KW"/>
</dbReference>
<dbReference type="GO" id="GO:0016114">
    <property type="term" value="P:terpenoid biosynthetic process"/>
    <property type="evidence" value="ECO:0007669"/>
    <property type="project" value="UniProtKB-UniPathway"/>
</dbReference>
<dbReference type="CDD" id="cd05233">
    <property type="entry name" value="SDR_c"/>
    <property type="match status" value="1"/>
</dbReference>
<dbReference type="FunFam" id="3.40.50.720:FF:000084">
    <property type="entry name" value="Short-chain dehydrogenase reductase"/>
    <property type="match status" value="1"/>
</dbReference>
<dbReference type="Gene3D" id="3.40.50.720">
    <property type="entry name" value="NAD(P)-binding Rossmann-like Domain"/>
    <property type="match status" value="1"/>
</dbReference>
<dbReference type="InterPro" id="IPR036291">
    <property type="entry name" value="NAD(P)-bd_dom_sf"/>
</dbReference>
<dbReference type="InterPro" id="IPR002347">
    <property type="entry name" value="SDR_fam"/>
</dbReference>
<dbReference type="NCBIfam" id="NF005559">
    <property type="entry name" value="PRK07231.1"/>
    <property type="match status" value="1"/>
</dbReference>
<dbReference type="PANTHER" id="PTHR24321">
    <property type="entry name" value="DEHYDROGENASES, SHORT CHAIN"/>
    <property type="match status" value="1"/>
</dbReference>
<dbReference type="PANTHER" id="PTHR24321:SF8">
    <property type="entry name" value="ESTRADIOL 17-BETA-DEHYDROGENASE 8-RELATED"/>
    <property type="match status" value="1"/>
</dbReference>
<dbReference type="Pfam" id="PF13561">
    <property type="entry name" value="adh_short_C2"/>
    <property type="match status" value="1"/>
</dbReference>
<dbReference type="PRINTS" id="PR00081">
    <property type="entry name" value="GDHRDH"/>
</dbReference>
<dbReference type="PRINTS" id="PR00080">
    <property type="entry name" value="SDRFAMILY"/>
</dbReference>
<dbReference type="SUPFAM" id="SSF51735">
    <property type="entry name" value="NAD(P)-binding Rossmann-fold domains"/>
    <property type="match status" value="1"/>
</dbReference>
<protein>
    <recommendedName>
        <fullName evidence="4">Short chain dehydrogenase/reductase astE</fullName>
        <ecNumber evidence="6">1.1.-.-</ecNumber>
    </recommendedName>
    <alternativeName>
        <fullName evidence="4">Astellolide biosynthesis cluster protein E</fullName>
    </alternativeName>
</protein>
<reference key="1">
    <citation type="journal article" date="2005" name="Nature">
        <title>Genome sequencing and analysis of Aspergillus oryzae.</title>
        <authorList>
            <person name="Machida M."/>
            <person name="Asai K."/>
            <person name="Sano M."/>
            <person name="Tanaka T."/>
            <person name="Kumagai T."/>
            <person name="Terai G."/>
            <person name="Kusumoto K."/>
            <person name="Arima T."/>
            <person name="Akita O."/>
            <person name="Kashiwagi Y."/>
            <person name="Abe K."/>
            <person name="Gomi K."/>
            <person name="Horiuchi H."/>
            <person name="Kitamoto K."/>
            <person name="Kobayashi T."/>
            <person name="Takeuchi M."/>
            <person name="Denning D.W."/>
            <person name="Galagan J.E."/>
            <person name="Nierman W.C."/>
            <person name="Yu J."/>
            <person name="Archer D.B."/>
            <person name="Bennett J.W."/>
            <person name="Bhatnagar D."/>
            <person name="Cleveland T.E."/>
            <person name="Fedorova N.D."/>
            <person name="Gotoh O."/>
            <person name="Horikawa H."/>
            <person name="Hosoyama A."/>
            <person name="Ichinomiya M."/>
            <person name="Igarashi R."/>
            <person name="Iwashita K."/>
            <person name="Juvvadi P.R."/>
            <person name="Kato M."/>
            <person name="Kato Y."/>
            <person name="Kin T."/>
            <person name="Kokubun A."/>
            <person name="Maeda H."/>
            <person name="Maeyama N."/>
            <person name="Maruyama J."/>
            <person name="Nagasaki H."/>
            <person name="Nakajima T."/>
            <person name="Oda K."/>
            <person name="Okada K."/>
            <person name="Paulsen I."/>
            <person name="Sakamoto K."/>
            <person name="Sawano T."/>
            <person name="Takahashi M."/>
            <person name="Takase K."/>
            <person name="Terabayashi Y."/>
            <person name="Wortman J.R."/>
            <person name="Yamada O."/>
            <person name="Yamagata Y."/>
            <person name="Anazawa H."/>
            <person name="Hata Y."/>
            <person name="Koide Y."/>
            <person name="Komori T."/>
            <person name="Koyama Y."/>
            <person name="Minetoki T."/>
            <person name="Suharnan S."/>
            <person name="Tanaka A."/>
            <person name="Isono K."/>
            <person name="Kuhara S."/>
            <person name="Ogasawara N."/>
            <person name="Kikuchi H."/>
        </authorList>
    </citation>
    <scope>NUCLEOTIDE SEQUENCE [LARGE SCALE GENOMIC DNA]</scope>
    <source>
        <strain>ATCC 42149 / RIB 40</strain>
    </source>
</reference>
<reference key="2">
    <citation type="journal article" date="2016" name="Sci. Rep.">
        <title>Identification of a novel sesquiterpene biosynthetic machinery involved in astellolide biosynthesis.</title>
        <authorList>
            <person name="Shinohara Y."/>
            <person name="Takahashi S."/>
            <person name="Osada H."/>
            <person name="Koyama Y."/>
        </authorList>
    </citation>
    <scope>INDUCTION</scope>
    <scope>FUNCTION</scope>
    <scope>DISRUPTION PHENOTYPE</scope>
    <scope>PATHWAY</scope>
</reference>
<feature type="chain" id="PRO_0000450120" description="Short chain dehydrogenase/reductase astE">
    <location>
        <begin position="1"/>
        <end position="261"/>
    </location>
</feature>
<feature type="active site" description="Proton donor" evidence="2">
    <location>
        <position position="150"/>
    </location>
</feature>
<feature type="active site" description="Proton donor" evidence="2">
    <location>
        <position position="164"/>
    </location>
</feature>
<feature type="active site" description="Lowers pKa of active site Tyr" evidence="2">
    <location>
        <position position="168"/>
    </location>
</feature>
<feature type="binding site" evidence="1">
    <location>
        <position position="24"/>
    </location>
    <ligand>
        <name>NADP(+)</name>
        <dbReference type="ChEBI" id="CHEBI:58349"/>
    </ligand>
</feature>
<feature type="binding site" evidence="1">
    <location>
        <position position="70"/>
    </location>
    <ligand>
        <name>NADP(+)</name>
        <dbReference type="ChEBI" id="CHEBI:58349"/>
    </ligand>
</feature>
<feature type="binding site" evidence="2">
    <location>
        <position position="97"/>
    </location>
    <ligand>
        <name>NADP(+)</name>
        <dbReference type="ChEBI" id="CHEBI:58349"/>
    </ligand>
</feature>
<feature type="binding site" evidence="1">
    <location>
        <position position="131"/>
    </location>
    <ligand>
        <name>NADP(+)</name>
        <dbReference type="ChEBI" id="CHEBI:58349"/>
    </ligand>
</feature>
<feature type="binding site" evidence="2">
    <location>
        <position position="164"/>
    </location>
    <ligand>
        <name>NADP(+)</name>
        <dbReference type="ChEBI" id="CHEBI:58349"/>
    </ligand>
</feature>
<feature type="binding site" evidence="2">
    <location>
        <position position="168"/>
    </location>
    <ligand>
        <name>NADP(+)</name>
        <dbReference type="ChEBI" id="CHEBI:58349"/>
    </ligand>
</feature>
<feature type="binding site" evidence="2">
    <location>
        <position position="197"/>
    </location>
    <ligand>
        <name>NADP(+)</name>
        <dbReference type="ChEBI" id="CHEBI:58349"/>
    </ligand>
</feature>
<feature type="binding site" evidence="1">
    <location>
        <position position="199"/>
    </location>
    <ligand>
        <name>NADP(+)</name>
        <dbReference type="ChEBI" id="CHEBI:58349"/>
    </ligand>
</feature>
<name>ASTE_ASPOR</name>
<evidence type="ECO:0000250" key="1">
    <source>
        <dbReference type="UniProtKB" id="L0E2Z4"/>
    </source>
</evidence>
<evidence type="ECO:0000250" key="2">
    <source>
        <dbReference type="UniProtKB" id="O93868"/>
    </source>
</evidence>
<evidence type="ECO:0000269" key="3">
    <source>
    </source>
</evidence>
<evidence type="ECO:0000303" key="4">
    <source>
    </source>
</evidence>
<evidence type="ECO:0000305" key="5"/>
<evidence type="ECO:0000305" key="6">
    <source>
    </source>
</evidence>
<sequence>MTGNEQKFSLQGKVAIVTGAGSGIGRETALCLANAGANVVVAEANETTGKETAAKVSAQTGSRGLFILTDVSRSESVQAMVIATIEAFGRLDIAVNNAALHPDASPIAELHEDHWQKIIGVNLVGVAFCLKWELQQMIQQGGGGSIINISSATINRPQEKMSAYIAAKHGITGLTQTAAVENGRHGIRVNALAPGGVATDLTMATMQELGLTEENEAARSSLFKRFAKPEEIAQSVLWLASDAASYVTGATIAVDSGLSLI</sequence>
<proteinExistence type="evidence at transcript level"/>
<organism>
    <name type="scientific">Aspergillus oryzae (strain ATCC 42149 / RIB 40)</name>
    <name type="common">Yellow koji mold</name>
    <dbReference type="NCBI Taxonomy" id="510516"/>
    <lineage>
        <taxon>Eukaryota</taxon>
        <taxon>Fungi</taxon>
        <taxon>Dikarya</taxon>
        <taxon>Ascomycota</taxon>
        <taxon>Pezizomycotina</taxon>
        <taxon>Eurotiomycetes</taxon>
        <taxon>Eurotiomycetidae</taxon>
        <taxon>Eurotiales</taxon>
        <taxon>Aspergillaceae</taxon>
        <taxon>Aspergillus</taxon>
        <taxon>Aspergillus subgen. Circumdati</taxon>
    </lineage>
</organism>
<gene>
    <name evidence="4" type="primary">astEA</name>
    <name type="ORF">AO090026000580</name>
</gene>